<organism>
    <name type="scientific">Methylobacterium radiotolerans (strain ATCC 27329 / DSM 1819 / JCM 2831 / NBRC 15690 / NCIMB 10815 / 0-1)</name>
    <dbReference type="NCBI Taxonomy" id="426355"/>
    <lineage>
        <taxon>Bacteria</taxon>
        <taxon>Pseudomonadati</taxon>
        <taxon>Pseudomonadota</taxon>
        <taxon>Alphaproteobacteria</taxon>
        <taxon>Hyphomicrobiales</taxon>
        <taxon>Methylobacteriaceae</taxon>
        <taxon>Methylobacterium</taxon>
    </lineage>
</organism>
<dbReference type="EC" id="2.7.4.23" evidence="1"/>
<dbReference type="EMBL" id="CP001001">
    <property type="protein sequence ID" value="ACB25824.1"/>
    <property type="molecule type" value="Genomic_DNA"/>
</dbReference>
<dbReference type="SMR" id="B1LY53"/>
<dbReference type="STRING" id="426355.Mrad2831_3849"/>
<dbReference type="KEGG" id="mrd:Mrad2831_3849"/>
<dbReference type="eggNOG" id="COG3709">
    <property type="taxonomic scope" value="Bacteria"/>
</dbReference>
<dbReference type="HOGENOM" id="CLU_102477_0_0_5"/>
<dbReference type="UniPathway" id="UPA00087">
    <property type="reaction ID" value="UER00175"/>
</dbReference>
<dbReference type="Proteomes" id="UP000006589">
    <property type="component" value="Chromosome"/>
</dbReference>
<dbReference type="GO" id="GO:0005524">
    <property type="term" value="F:ATP binding"/>
    <property type="evidence" value="ECO:0007669"/>
    <property type="project" value="UniProtKB-KW"/>
</dbReference>
<dbReference type="GO" id="GO:0033863">
    <property type="term" value="F:ribose 1,5-bisphosphate phosphokinase activity"/>
    <property type="evidence" value="ECO:0007669"/>
    <property type="project" value="UniProtKB-UniRule"/>
</dbReference>
<dbReference type="GO" id="GO:0006015">
    <property type="term" value="P:5-phosphoribose 1-diphosphate biosynthetic process"/>
    <property type="evidence" value="ECO:0007669"/>
    <property type="project" value="UniProtKB-UniRule"/>
</dbReference>
<dbReference type="GO" id="GO:0019634">
    <property type="term" value="P:organic phosphonate metabolic process"/>
    <property type="evidence" value="ECO:0007669"/>
    <property type="project" value="UniProtKB-UniRule"/>
</dbReference>
<dbReference type="Gene3D" id="3.40.50.300">
    <property type="entry name" value="P-loop containing nucleotide triphosphate hydrolases"/>
    <property type="match status" value="1"/>
</dbReference>
<dbReference type="HAMAP" id="MF_00836">
    <property type="entry name" value="PhnN"/>
    <property type="match status" value="1"/>
</dbReference>
<dbReference type="InterPro" id="IPR027417">
    <property type="entry name" value="P-loop_NTPase"/>
</dbReference>
<dbReference type="InterPro" id="IPR012699">
    <property type="entry name" value="PhnN"/>
</dbReference>
<dbReference type="NCBIfam" id="TIGR02322">
    <property type="entry name" value="phosphon_PhnN"/>
    <property type="match status" value="1"/>
</dbReference>
<dbReference type="SUPFAM" id="SSF52540">
    <property type="entry name" value="P-loop containing nucleoside triphosphate hydrolases"/>
    <property type="match status" value="1"/>
</dbReference>
<gene>
    <name evidence="1" type="primary">phnN</name>
    <name type="ordered locus">Mrad2831_3849</name>
</gene>
<keyword id="KW-0067">ATP-binding</keyword>
<keyword id="KW-0547">Nucleotide-binding</keyword>
<keyword id="KW-0808">Transferase</keyword>
<accession>B1LY53</accession>
<feature type="chain" id="PRO_0000412791" description="Ribose 1,5-bisphosphate phosphokinase PhnN">
    <location>
        <begin position="1"/>
        <end position="176"/>
    </location>
</feature>
<feature type="binding site" evidence="1">
    <location>
        <begin position="10"/>
        <end position="17"/>
    </location>
    <ligand>
        <name>ATP</name>
        <dbReference type="ChEBI" id="CHEBI:30616"/>
    </ligand>
</feature>
<protein>
    <recommendedName>
        <fullName evidence="1">Ribose 1,5-bisphosphate phosphokinase PhnN</fullName>
        <ecNumber evidence="1">2.7.4.23</ecNumber>
    </recommendedName>
    <alternativeName>
        <fullName evidence="1">Ribose 1,5-bisphosphokinase</fullName>
    </alternativeName>
</protein>
<evidence type="ECO:0000255" key="1">
    <source>
        <dbReference type="HAMAP-Rule" id="MF_00836"/>
    </source>
</evidence>
<sequence length="176" mass="18440">MPGCLVLVVGPSGAGKDTLLRLARAALAGDPRYVFPRRLVTRPPSADEDNDEIDEAAFAEGCAAGRFTLSWRAHGLGYALPEAVGRRVAEGHVVVCNVSRRVVAGARESGRRVSVVEITAPPEILARRIAARGRAQDGDLAARLAREGGVTADLTILNTGAADEAAARLVAHLRAC</sequence>
<comment type="function">
    <text evidence="1">Catalyzes the phosphorylation of ribose 1,5-bisphosphate to 5-phospho-D-ribosyl alpha-1-diphosphate (PRPP).</text>
</comment>
<comment type="catalytic activity">
    <reaction evidence="1">
        <text>alpha-D-ribose 1,5-bisphosphate + ATP = 5-phospho-alpha-D-ribose 1-diphosphate + ADP</text>
        <dbReference type="Rhea" id="RHEA:20109"/>
        <dbReference type="ChEBI" id="CHEBI:30616"/>
        <dbReference type="ChEBI" id="CHEBI:58017"/>
        <dbReference type="ChEBI" id="CHEBI:68688"/>
        <dbReference type="ChEBI" id="CHEBI:456216"/>
        <dbReference type="EC" id="2.7.4.23"/>
    </reaction>
</comment>
<comment type="pathway">
    <text evidence="1">Metabolic intermediate biosynthesis; 5-phospho-alpha-D-ribose 1-diphosphate biosynthesis; 5-phospho-alpha-D-ribose 1-diphosphate from D-ribose 5-phosphate (route II): step 3/3.</text>
</comment>
<comment type="similarity">
    <text evidence="1">Belongs to the ribose 1,5-bisphosphokinase family.</text>
</comment>
<name>PHNN_METRJ</name>
<proteinExistence type="inferred from homology"/>
<reference key="1">
    <citation type="submission" date="2008-03" db="EMBL/GenBank/DDBJ databases">
        <title>Complete sequence of chromosome of Methylobacterium radiotolerans JCM 2831.</title>
        <authorList>
            <consortium name="US DOE Joint Genome Institute"/>
            <person name="Copeland A."/>
            <person name="Lucas S."/>
            <person name="Lapidus A."/>
            <person name="Glavina del Rio T."/>
            <person name="Dalin E."/>
            <person name="Tice H."/>
            <person name="Bruce D."/>
            <person name="Goodwin L."/>
            <person name="Pitluck S."/>
            <person name="Kiss H."/>
            <person name="Brettin T."/>
            <person name="Detter J.C."/>
            <person name="Han C."/>
            <person name="Kuske C.R."/>
            <person name="Schmutz J."/>
            <person name="Larimer F."/>
            <person name="Land M."/>
            <person name="Hauser L."/>
            <person name="Kyrpides N."/>
            <person name="Mikhailova N."/>
            <person name="Marx C.J."/>
            <person name="Richardson P."/>
        </authorList>
    </citation>
    <scope>NUCLEOTIDE SEQUENCE [LARGE SCALE GENOMIC DNA]</scope>
    <source>
        <strain>ATCC 27329 / DSM 1819 / JCM 2831 / NBRC 15690 / NCIMB 10815 / 0-1</strain>
    </source>
</reference>